<sequence>MSYTVIYAGTFDPMTNGHLDIIERASELFGQVIVAVAKNPSKQPLFSLEERTALVRQSCAHLANVQAVGFSGLLADFAKQHQAKALVRGIRGSDDIEYEIRLAQLNDKLSGRLDTVFLPPSVTWRYLSSTMVREIYRHQGDVAQFVPNAVLCALKEKE</sequence>
<comment type="function">
    <text evidence="1">Reversibly transfers an adenylyl group from ATP to 4'-phosphopantetheine, yielding dephospho-CoA (dPCoA) and pyrophosphate.</text>
</comment>
<comment type="catalytic activity">
    <reaction evidence="1">
        <text>(R)-4'-phosphopantetheine + ATP + H(+) = 3'-dephospho-CoA + diphosphate</text>
        <dbReference type="Rhea" id="RHEA:19801"/>
        <dbReference type="ChEBI" id="CHEBI:15378"/>
        <dbReference type="ChEBI" id="CHEBI:30616"/>
        <dbReference type="ChEBI" id="CHEBI:33019"/>
        <dbReference type="ChEBI" id="CHEBI:57328"/>
        <dbReference type="ChEBI" id="CHEBI:61723"/>
        <dbReference type="EC" id="2.7.7.3"/>
    </reaction>
</comment>
<comment type="cofactor">
    <cofactor evidence="1">
        <name>Mg(2+)</name>
        <dbReference type="ChEBI" id="CHEBI:18420"/>
    </cofactor>
</comment>
<comment type="pathway">
    <text evidence="1">Cofactor biosynthesis; coenzyme A biosynthesis; CoA from (R)-pantothenate: step 4/5.</text>
</comment>
<comment type="subunit">
    <text evidence="1">Homohexamer.</text>
</comment>
<comment type="subcellular location">
    <subcellularLocation>
        <location evidence="1">Cytoplasm</location>
    </subcellularLocation>
</comment>
<comment type="similarity">
    <text evidence="1">Belongs to the bacterial CoaD family.</text>
</comment>
<gene>
    <name evidence="1" type="primary">coaD</name>
    <name type="ordered locus">APP7_1191</name>
</gene>
<keyword id="KW-0067">ATP-binding</keyword>
<keyword id="KW-0173">Coenzyme A biosynthesis</keyword>
<keyword id="KW-0963">Cytoplasm</keyword>
<keyword id="KW-0460">Magnesium</keyword>
<keyword id="KW-0547">Nucleotide-binding</keyword>
<keyword id="KW-0548">Nucleotidyltransferase</keyword>
<keyword id="KW-0808">Transferase</keyword>
<dbReference type="EC" id="2.7.7.3" evidence="1"/>
<dbReference type="EMBL" id="CP001091">
    <property type="protein sequence ID" value="ACE61843.1"/>
    <property type="molecule type" value="Genomic_DNA"/>
</dbReference>
<dbReference type="RefSeq" id="WP_005617615.1">
    <property type="nucleotide sequence ID" value="NC_010939.1"/>
</dbReference>
<dbReference type="SMR" id="B3GY20"/>
<dbReference type="KEGG" id="apa:APP7_1191"/>
<dbReference type="HOGENOM" id="CLU_100149_0_1_6"/>
<dbReference type="UniPathway" id="UPA00241">
    <property type="reaction ID" value="UER00355"/>
</dbReference>
<dbReference type="Proteomes" id="UP000001226">
    <property type="component" value="Chromosome"/>
</dbReference>
<dbReference type="GO" id="GO:0005737">
    <property type="term" value="C:cytoplasm"/>
    <property type="evidence" value="ECO:0007669"/>
    <property type="project" value="UniProtKB-SubCell"/>
</dbReference>
<dbReference type="GO" id="GO:0005524">
    <property type="term" value="F:ATP binding"/>
    <property type="evidence" value="ECO:0007669"/>
    <property type="project" value="UniProtKB-KW"/>
</dbReference>
<dbReference type="GO" id="GO:0004595">
    <property type="term" value="F:pantetheine-phosphate adenylyltransferase activity"/>
    <property type="evidence" value="ECO:0007669"/>
    <property type="project" value="UniProtKB-UniRule"/>
</dbReference>
<dbReference type="GO" id="GO:0015937">
    <property type="term" value="P:coenzyme A biosynthetic process"/>
    <property type="evidence" value="ECO:0007669"/>
    <property type="project" value="UniProtKB-UniRule"/>
</dbReference>
<dbReference type="CDD" id="cd02163">
    <property type="entry name" value="PPAT"/>
    <property type="match status" value="1"/>
</dbReference>
<dbReference type="Gene3D" id="3.40.50.620">
    <property type="entry name" value="HUPs"/>
    <property type="match status" value="1"/>
</dbReference>
<dbReference type="HAMAP" id="MF_00151">
    <property type="entry name" value="PPAT_bact"/>
    <property type="match status" value="1"/>
</dbReference>
<dbReference type="InterPro" id="IPR004821">
    <property type="entry name" value="Cyt_trans-like"/>
</dbReference>
<dbReference type="InterPro" id="IPR001980">
    <property type="entry name" value="PPAT"/>
</dbReference>
<dbReference type="InterPro" id="IPR014729">
    <property type="entry name" value="Rossmann-like_a/b/a_fold"/>
</dbReference>
<dbReference type="NCBIfam" id="TIGR01510">
    <property type="entry name" value="coaD_prev_kdtB"/>
    <property type="match status" value="1"/>
</dbReference>
<dbReference type="NCBIfam" id="TIGR00125">
    <property type="entry name" value="cyt_tran_rel"/>
    <property type="match status" value="1"/>
</dbReference>
<dbReference type="PANTHER" id="PTHR21342">
    <property type="entry name" value="PHOSPHOPANTETHEINE ADENYLYLTRANSFERASE"/>
    <property type="match status" value="1"/>
</dbReference>
<dbReference type="PANTHER" id="PTHR21342:SF1">
    <property type="entry name" value="PHOSPHOPANTETHEINE ADENYLYLTRANSFERASE"/>
    <property type="match status" value="1"/>
</dbReference>
<dbReference type="Pfam" id="PF01467">
    <property type="entry name" value="CTP_transf_like"/>
    <property type="match status" value="1"/>
</dbReference>
<dbReference type="PRINTS" id="PR01020">
    <property type="entry name" value="LPSBIOSNTHSS"/>
</dbReference>
<dbReference type="SUPFAM" id="SSF52374">
    <property type="entry name" value="Nucleotidylyl transferase"/>
    <property type="match status" value="1"/>
</dbReference>
<feature type="chain" id="PRO_1000096755" description="Phosphopantetheine adenylyltransferase">
    <location>
        <begin position="1"/>
        <end position="158"/>
    </location>
</feature>
<feature type="binding site" evidence="1">
    <location>
        <begin position="10"/>
        <end position="11"/>
    </location>
    <ligand>
        <name>ATP</name>
        <dbReference type="ChEBI" id="CHEBI:30616"/>
    </ligand>
</feature>
<feature type="binding site" evidence="1">
    <location>
        <position position="10"/>
    </location>
    <ligand>
        <name>substrate</name>
    </ligand>
</feature>
<feature type="binding site" evidence="1">
    <location>
        <position position="18"/>
    </location>
    <ligand>
        <name>ATP</name>
        <dbReference type="ChEBI" id="CHEBI:30616"/>
    </ligand>
</feature>
<feature type="binding site" evidence="1">
    <location>
        <position position="42"/>
    </location>
    <ligand>
        <name>substrate</name>
    </ligand>
</feature>
<feature type="binding site" evidence="1">
    <location>
        <position position="74"/>
    </location>
    <ligand>
        <name>substrate</name>
    </ligand>
</feature>
<feature type="binding site" evidence="1">
    <location>
        <position position="88"/>
    </location>
    <ligand>
        <name>substrate</name>
    </ligand>
</feature>
<feature type="binding site" evidence="1">
    <location>
        <begin position="89"/>
        <end position="91"/>
    </location>
    <ligand>
        <name>ATP</name>
        <dbReference type="ChEBI" id="CHEBI:30616"/>
    </ligand>
</feature>
<feature type="binding site" evidence="1">
    <location>
        <position position="99"/>
    </location>
    <ligand>
        <name>ATP</name>
        <dbReference type="ChEBI" id="CHEBI:30616"/>
    </ligand>
</feature>
<feature type="binding site" evidence="1">
    <location>
        <begin position="124"/>
        <end position="130"/>
    </location>
    <ligand>
        <name>ATP</name>
        <dbReference type="ChEBI" id="CHEBI:30616"/>
    </ligand>
</feature>
<feature type="site" description="Transition state stabilizer" evidence="1">
    <location>
        <position position="18"/>
    </location>
</feature>
<accession>B3GY20</accession>
<name>COAD_ACTP7</name>
<protein>
    <recommendedName>
        <fullName evidence="1">Phosphopantetheine adenylyltransferase</fullName>
        <ecNumber evidence="1">2.7.7.3</ecNumber>
    </recommendedName>
    <alternativeName>
        <fullName evidence="1">Dephospho-CoA pyrophosphorylase</fullName>
    </alternativeName>
    <alternativeName>
        <fullName evidence="1">Pantetheine-phosphate adenylyltransferase</fullName>
        <shortName evidence="1">PPAT</shortName>
    </alternativeName>
</protein>
<organism>
    <name type="scientific">Actinobacillus pleuropneumoniae serotype 7 (strain AP76)</name>
    <dbReference type="NCBI Taxonomy" id="537457"/>
    <lineage>
        <taxon>Bacteria</taxon>
        <taxon>Pseudomonadati</taxon>
        <taxon>Pseudomonadota</taxon>
        <taxon>Gammaproteobacteria</taxon>
        <taxon>Pasteurellales</taxon>
        <taxon>Pasteurellaceae</taxon>
        <taxon>Actinobacillus</taxon>
    </lineage>
</organism>
<reference key="1">
    <citation type="submission" date="2008-06" db="EMBL/GenBank/DDBJ databases">
        <title>Genome and proteome analysis of A. pleuropneumoniae serotype 7.</title>
        <authorList>
            <person name="Linke B."/>
            <person name="Buettner F."/>
            <person name="Martinez-Arias R."/>
            <person name="Goesmann A."/>
            <person name="Baltes N."/>
            <person name="Tegetmeyer H."/>
            <person name="Singh M."/>
            <person name="Gerlach G.F."/>
        </authorList>
    </citation>
    <scope>NUCLEOTIDE SEQUENCE [LARGE SCALE GENOMIC DNA]</scope>
    <source>
        <strain>AP76</strain>
    </source>
</reference>
<proteinExistence type="inferred from homology"/>
<evidence type="ECO:0000255" key="1">
    <source>
        <dbReference type="HAMAP-Rule" id="MF_00151"/>
    </source>
</evidence>